<feature type="chain" id="PRO_0000424435" description="Exosome complex component RRP45B">
    <location>
        <begin position="1"/>
        <end position="438"/>
    </location>
</feature>
<feature type="region of interest" description="Disordered" evidence="1">
    <location>
        <begin position="293"/>
        <end position="322"/>
    </location>
</feature>
<feature type="region of interest" description="Disordered" evidence="1">
    <location>
        <begin position="334"/>
        <end position="438"/>
    </location>
</feature>
<feature type="compositionally biased region" description="Basic and acidic residues" evidence="1">
    <location>
        <begin position="307"/>
        <end position="322"/>
    </location>
</feature>
<feature type="compositionally biased region" description="Basic and acidic residues" evidence="1">
    <location>
        <begin position="334"/>
        <end position="347"/>
    </location>
</feature>
<feature type="compositionally biased region" description="Polar residues" evidence="1">
    <location>
        <begin position="380"/>
        <end position="394"/>
    </location>
</feature>
<feature type="compositionally biased region" description="Basic and acidic residues" evidence="1">
    <location>
        <begin position="410"/>
        <end position="429"/>
    </location>
</feature>
<sequence length="438" mass="48296">MEGRLANMWRLTVNESKFVETALQSELRVDGRGLYDYRKLTIKFGKEYGSSEVQLGQTHVMGFVTAQLVQPYKDRPNEGSLSIFTEFSPMADPSFEPGRPGESAVELGRIIDRGLRESRAVDTESLCVLAGKMVWSVRIDLHILDNGGNLVDAANIAALAALMTFRRPDCTVGGENGQEVIIHPLEEREPLPLIIHHLPIAFTFGFFNKGNIVVMDPTYVEEAVMCGRMTVTVNANGDICAIQKPGEEGVNQSVILHCLRLASSRAAATTKIIREEVEAYNCERSLQKVKRHPTLAKSEVSGPTVAVKEEHRKSSDQERAAEISREHVERLKLSTEEVRSSKEEEAANFKGGPSNWDPYSEAMDVDSLKVSLASRGDPVTKSSSTKKMNGSGNAQKVGVEISVEEVTGELGKKDTKHKDGEMTLKDAVKPKKKRKNKS</sequence>
<gene>
    <name evidence="5" type="primary">RRP45B</name>
    <name evidence="4" type="synonym">CER7</name>
    <name type="ordered locus">At3g60500</name>
    <name type="ORF">T8B10.160</name>
</gene>
<evidence type="ECO:0000256" key="1">
    <source>
        <dbReference type="SAM" id="MobiDB-lite"/>
    </source>
</evidence>
<evidence type="ECO:0000269" key="2">
    <source>
    </source>
</evidence>
<evidence type="ECO:0000269" key="3">
    <source>
    </source>
</evidence>
<evidence type="ECO:0000303" key="4">
    <source>
    </source>
</evidence>
<evidence type="ECO:0000305" key="5"/>
<keyword id="KW-0963">Cytoplasm</keyword>
<keyword id="KW-0539">Nucleus</keyword>
<keyword id="KW-1185">Reference proteome</keyword>
<keyword id="KW-0694">RNA-binding</keyword>
<name>CER7_ARATH</name>
<reference key="1">
    <citation type="journal article" date="2007" name="Plant Cell">
        <title>A core subunit of the RNA-processing/degrading exosome specifically influences cuticular wax biosynthesis in Arabidopsis.</title>
        <authorList>
            <person name="Hooker T.S."/>
            <person name="Lam P."/>
            <person name="Zheng H."/>
            <person name="Kunst L."/>
        </authorList>
    </citation>
    <scope>NUCLEOTIDE SEQUENCE [GENOMIC DNA]</scope>
    <scope>FUNCTION</scope>
    <scope>SUBCELLULAR LOCATION</scope>
    <scope>DISRUPTION PHENOTYPE</scope>
    <source>
        <strain>cv. Landsberg erecta</strain>
    </source>
</reference>
<reference key="2">
    <citation type="journal article" date="2000" name="Nature">
        <title>Sequence and analysis of chromosome 3 of the plant Arabidopsis thaliana.</title>
        <authorList>
            <person name="Salanoubat M."/>
            <person name="Lemcke K."/>
            <person name="Rieger M."/>
            <person name="Ansorge W."/>
            <person name="Unseld M."/>
            <person name="Fartmann B."/>
            <person name="Valle G."/>
            <person name="Bloecker H."/>
            <person name="Perez-Alonso M."/>
            <person name="Obermaier B."/>
            <person name="Delseny M."/>
            <person name="Boutry M."/>
            <person name="Grivell L.A."/>
            <person name="Mache R."/>
            <person name="Puigdomenech P."/>
            <person name="De Simone V."/>
            <person name="Choisne N."/>
            <person name="Artiguenave F."/>
            <person name="Robert C."/>
            <person name="Brottier P."/>
            <person name="Wincker P."/>
            <person name="Cattolico L."/>
            <person name="Weissenbach J."/>
            <person name="Saurin W."/>
            <person name="Quetier F."/>
            <person name="Schaefer M."/>
            <person name="Mueller-Auer S."/>
            <person name="Gabel C."/>
            <person name="Fuchs M."/>
            <person name="Benes V."/>
            <person name="Wurmbach E."/>
            <person name="Drzonek H."/>
            <person name="Erfle H."/>
            <person name="Jordan N."/>
            <person name="Bangert S."/>
            <person name="Wiedelmann R."/>
            <person name="Kranz H."/>
            <person name="Voss H."/>
            <person name="Holland R."/>
            <person name="Brandt P."/>
            <person name="Nyakatura G."/>
            <person name="Vezzi A."/>
            <person name="D'Angelo M."/>
            <person name="Pallavicini A."/>
            <person name="Toppo S."/>
            <person name="Simionati B."/>
            <person name="Conrad A."/>
            <person name="Hornischer K."/>
            <person name="Kauer G."/>
            <person name="Loehnert T.-H."/>
            <person name="Nordsiek G."/>
            <person name="Reichelt J."/>
            <person name="Scharfe M."/>
            <person name="Schoen O."/>
            <person name="Bargues M."/>
            <person name="Terol J."/>
            <person name="Climent J."/>
            <person name="Navarro P."/>
            <person name="Collado C."/>
            <person name="Perez-Perez A."/>
            <person name="Ottenwaelder B."/>
            <person name="Duchemin D."/>
            <person name="Cooke R."/>
            <person name="Laudie M."/>
            <person name="Berger-Llauro C."/>
            <person name="Purnelle B."/>
            <person name="Masuy D."/>
            <person name="de Haan M."/>
            <person name="Maarse A.C."/>
            <person name="Alcaraz J.-P."/>
            <person name="Cottet A."/>
            <person name="Casacuberta E."/>
            <person name="Monfort A."/>
            <person name="Argiriou A."/>
            <person name="Flores M."/>
            <person name="Liguori R."/>
            <person name="Vitale D."/>
            <person name="Mannhaupt G."/>
            <person name="Haase D."/>
            <person name="Schoof H."/>
            <person name="Rudd S."/>
            <person name="Zaccaria P."/>
            <person name="Mewes H.-W."/>
            <person name="Mayer K.F.X."/>
            <person name="Kaul S."/>
            <person name="Town C.D."/>
            <person name="Koo H.L."/>
            <person name="Tallon L.J."/>
            <person name="Jenkins J."/>
            <person name="Rooney T."/>
            <person name="Rizzo M."/>
            <person name="Walts A."/>
            <person name="Utterback T."/>
            <person name="Fujii C.Y."/>
            <person name="Shea T.P."/>
            <person name="Creasy T.H."/>
            <person name="Haas B."/>
            <person name="Maiti R."/>
            <person name="Wu D."/>
            <person name="Peterson J."/>
            <person name="Van Aken S."/>
            <person name="Pai G."/>
            <person name="Militscher J."/>
            <person name="Sellers P."/>
            <person name="Gill J.E."/>
            <person name="Feldblyum T.V."/>
            <person name="Preuss D."/>
            <person name="Lin X."/>
            <person name="Nierman W.C."/>
            <person name="Salzberg S.L."/>
            <person name="White O."/>
            <person name="Venter J.C."/>
            <person name="Fraser C.M."/>
            <person name="Kaneko T."/>
            <person name="Nakamura Y."/>
            <person name="Sato S."/>
            <person name="Kato T."/>
            <person name="Asamizu E."/>
            <person name="Sasamoto S."/>
            <person name="Kimura T."/>
            <person name="Idesawa K."/>
            <person name="Kawashima K."/>
            <person name="Kishida Y."/>
            <person name="Kiyokawa C."/>
            <person name="Kohara M."/>
            <person name="Matsumoto M."/>
            <person name="Matsuno A."/>
            <person name="Muraki A."/>
            <person name="Nakayama S."/>
            <person name="Nakazaki N."/>
            <person name="Shinpo S."/>
            <person name="Takeuchi C."/>
            <person name="Wada T."/>
            <person name="Watanabe A."/>
            <person name="Yamada M."/>
            <person name="Yasuda M."/>
            <person name="Tabata S."/>
        </authorList>
    </citation>
    <scope>NUCLEOTIDE SEQUENCE [LARGE SCALE GENOMIC DNA]</scope>
    <source>
        <strain>cv. Columbia</strain>
    </source>
</reference>
<reference key="3">
    <citation type="journal article" date="2017" name="Plant J.">
        <title>Araport11: a complete reannotation of the Arabidopsis thaliana reference genome.</title>
        <authorList>
            <person name="Cheng C.Y."/>
            <person name="Krishnakumar V."/>
            <person name="Chan A.P."/>
            <person name="Thibaud-Nissen F."/>
            <person name="Schobel S."/>
            <person name="Town C.D."/>
        </authorList>
    </citation>
    <scope>GENOME REANNOTATION</scope>
    <source>
        <strain>cv. Columbia</strain>
    </source>
</reference>
<reference key="4">
    <citation type="journal article" date="2003" name="Science">
        <title>Empirical analysis of transcriptional activity in the Arabidopsis genome.</title>
        <authorList>
            <person name="Yamada K."/>
            <person name="Lim J."/>
            <person name="Dale J.M."/>
            <person name="Chen H."/>
            <person name="Shinn P."/>
            <person name="Palm C.J."/>
            <person name="Southwick A.M."/>
            <person name="Wu H.C."/>
            <person name="Kim C.J."/>
            <person name="Nguyen M."/>
            <person name="Pham P.K."/>
            <person name="Cheuk R.F."/>
            <person name="Karlin-Newmann G."/>
            <person name="Liu S.X."/>
            <person name="Lam B."/>
            <person name="Sakano H."/>
            <person name="Wu T."/>
            <person name="Yu G."/>
            <person name="Miranda M."/>
            <person name="Quach H.L."/>
            <person name="Tripp M."/>
            <person name="Chang C.H."/>
            <person name="Lee J.M."/>
            <person name="Toriumi M.J."/>
            <person name="Chan M.M."/>
            <person name="Tang C.C."/>
            <person name="Onodera C.S."/>
            <person name="Deng J.M."/>
            <person name="Akiyama K."/>
            <person name="Ansari Y."/>
            <person name="Arakawa T."/>
            <person name="Banh J."/>
            <person name="Banno F."/>
            <person name="Bowser L."/>
            <person name="Brooks S.Y."/>
            <person name="Carninci P."/>
            <person name="Chao Q."/>
            <person name="Choy N."/>
            <person name="Enju A."/>
            <person name="Goldsmith A.D."/>
            <person name="Gurjal M."/>
            <person name="Hansen N.F."/>
            <person name="Hayashizaki Y."/>
            <person name="Johnson-Hopson C."/>
            <person name="Hsuan V.W."/>
            <person name="Iida K."/>
            <person name="Karnes M."/>
            <person name="Khan S."/>
            <person name="Koesema E."/>
            <person name="Ishida J."/>
            <person name="Jiang P.X."/>
            <person name="Jones T."/>
            <person name="Kawai J."/>
            <person name="Kamiya A."/>
            <person name="Meyers C."/>
            <person name="Nakajima M."/>
            <person name="Narusaka M."/>
            <person name="Seki M."/>
            <person name="Sakurai T."/>
            <person name="Satou M."/>
            <person name="Tamse R."/>
            <person name="Vaysberg M."/>
            <person name="Wallender E.K."/>
            <person name="Wong C."/>
            <person name="Yamamura Y."/>
            <person name="Yuan S."/>
            <person name="Shinozaki K."/>
            <person name="Davis R.W."/>
            <person name="Theologis A."/>
            <person name="Ecker J.R."/>
        </authorList>
    </citation>
    <scope>NUCLEOTIDE SEQUENCE [LARGE SCALE MRNA]</scope>
    <source>
        <strain>cv. Columbia</strain>
    </source>
</reference>
<reference key="5">
    <citation type="journal article" date="2012" name="Plant Physiol.">
        <title>RDR1 and SGS3, components of RNA-mediated gene silencing, are required for the regulation of cuticular wax biosynthesis in developing inflorescence stems of Arabidopsis.</title>
        <authorList>
            <person name="Lam P."/>
            <person name="Zhao L."/>
            <person name="McFarlane H.E."/>
            <person name="Aiga M."/>
            <person name="Lam V."/>
            <person name="Hooker T.S."/>
            <person name="Kunst L."/>
        </authorList>
    </citation>
    <scope>FUNCTION</scope>
    <scope>DISRUPTION PHENOTYPE</scope>
</reference>
<protein>
    <recommendedName>
        <fullName evidence="5">Exosome complex component RRP45B</fullName>
    </recommendedName>
    <alternativeName>
        <fullName evidence="4">Protein ECERIFERUM 7</fullName>
    </alternativeName>
    <alternativeName>
        <fullName>RNA-processing protein CER7</fullName>
    </alternativeName>
    <alternativeName>
        <fullName evidence="5">RRP45 homolog B</fullName>
    </alternativeName>
    <alternativeName>
        <fullName evidence="5">Ribosomal RNA-processing protein 45B</fullName>
    </alternativeName>
</protein>
<accession>Q9M209</accession>
<dbReference type="EMBL" id="DQ869270">
    <property type="protein sequence ID" value="ABI31441.1"/>
    <property type="molecule type" value="Genomic_DNA"/>
</dbReference>
<dbReference type="EMBL" id="AL138646">
    <property type="protein sequence ID" value="CAB81836.1"/>
    <property type="molecule type" value="Genomic_DNA"/>
</dbReference>
<dbReference type="EMBL" id="CP002686">
    <property type="protein sequence ID" value="AEE80068.1"/>
    <property type="molecule type" value="Genomic_DNA"/>
</dbReference>
<dbReference type="EMBL" id="CP002686">
    <property type="protein sequence ID" value="AEE80069.1"/>
    <property type="molecule type" value="Genomic_DNA"/>
</dbReference>
<dbReference type="EMBL" id="CP002686">
    <property type="protein sequence ID" value="AEE80070.1"/>
    <property type="molecule type" value="Genomic_DNA"/>
</dbReference>
<dbReference type="EMBL" id="BT004196">
    <property type="protein sequence ID" value="AAO42214.1"/>
    <property type="molecule type" value="mRNA"/>
</dbReference>
<dbReference type="EMBL" id="BT005701">
    <property type="protein sequence ID" value="AAO64121.1"/>
    <property type="molecule type" value="mRNA"/>
</dbReference>
<dbReference type="PIR" id="T47861">
    <property type="entry name" value="T47861"/>
</dbReference>
<dbReference type="RefSeq" id="NP_001190143.1">
    <property type="nucleotide sequence ID" value="NM_001203214.1"/>
</dbReference>
<dbReference type="RefSeq" id="NP_191609.1">
    <property type="nucleotide sequence ID" value="NM_115914.4"/>
</dbReference>
<dbReference type="RefSeq" id="NP_974466.1">
    <property type="nucleotide sequence ID" value="NM_202737.3"/>
</dbReference>
<dbReference type="SMR" id="Q9M209"/>
<dbReference type="BioGRID" id="10535">
    <property type="interactions" value="14"/>
</dbReference>
<dbReference type="FunCoup" id="Q9M209">
    <property type="interactions" value="3920"/>
</dbReference>
<dbReference type="IntAct" id="Q9M209">
    <property type="interactions" value="2"/>
</dbReference>
<dbReference type="STRING" id="3702.Q9M209"/>
<dbReference type="GlyGen" id="Q9M209">
    <property type="glycosylation" value="1 site"/>
</dbReference>
<dbReference type="iPTMnet" id="Q9M209"/>
<dbReference type="PaxDb" id="3702-AT3G60500.3"/>
<dbReference type="ProteomicsDB" id="224458"/>
<dbReference type="EnsemblPlants" id="AT3G60500.1">
    <property type="protein sequence ID" value="AT3G60500.1"/>
    <property type="gene ID" value="AT3G60500"/>
</dbReference>
<dbReference type="EnsemblPlants" id="AT3G60500.2">
    <property type="protein sequence ID" value="AT3G60500.2"/>
    <property type="gene ID" value="AT3G60500"/>
</dbReference>
<dbReference type="EnsemblPlants" id="AT3G60500.3">
    <property type="protein sequence ID" value="AT3G60500.3"/>
    <property type="gene ID" value="AT3G60500"/>
</dbReference>
<dbReference type="GeneID" id="825221"/>
<dbReference type="Gramene" id="AT3G60500.1">
    <property type="protein sequence ID" value="AT3G60500.1"/>
    <property type="gene ID" value="AT3G60500"/>
</dbReference>
<dbReference type="Gramene" id="AT3G60500.2">
    <property type="protein sequence ID" value="AT3G60500.2"/>
    <property type="gene ID" value="AT3G60500"/>
</dbReference>
<dbReference type="Gramene" id="AT3G60500.3">
    <property type="protein sequence ID" value="AT3G60500.3"/>
    <property type="gene ID" value="AT3G60500"/>
</dbReference>
<dbReference type="KEGG" id="ath:AT3G60500"/>
<dbReference type="Araport" id="AT3G60500"/>
<dbReference type="TAIR" id="AT3G60500">
    <property type="gene designation" value="CER7"/>
</dbReference>
<dbReference type="eggNOG" id="KOG1614">
    <property type="taxonomic scope" value="Eukaryota"/>
</dbReference>
<dbReference type="HOGENOM" id="CLU_038194_1_1_1"/>
<dbReference type="InParanoid" id="Q9M209"/>
<dbReference type="OrthoDB" id="10264038at2759"/>
<dbReference type="PhylomeDB" id="Q9M209"/>
<dbReference type="PRO" id="PR:Q9M209"/>
<dbReference type="Proteomes" id="UP000006548">
    <property type="component" value="Chromosome 3"/>
</dbReference>
<dbReference type="ExpressionAtlas" id="Q9M209">
    <property type="expression patterns" value="baseline and differential"/>
</dbReference>
<dbReference type="GO" id="GO:0005737">
    <property type="term" value="C:cytoplasm"/>
    <property type="evidence" value="ECO:0000314"/>
    <property type="project" value="TAIR"/>
</dbReference>
<dbReference type="GO" id="GO:0005829">
    <property type="term" value="C:cytosol"/>
    <property type="evidence" value="ECO:0007005"/>
    <property type="project" value="TAIR"/>
</dbReference>
<dbReference type="GO" id="GO:0000178">
    <property type="term" value="C:exosome (RNase complex)"/>
    <property type="evidence" value="ECO:0007669"/>
    <property type="project" value="InterPro"/>
</dbReference>
<dbReference type="GO" id="GO:0005634">
    <property type="term" value="C:nucleus"/>
    <property type="evidence" value="ECO:0000314"/>
    <property type="project" value="TAIR"/>
</dbReference>
<dbReference type="GO" id="GO:0000175">
    <property type="term" value="F:3'-5'-RNA exonuclease activity"/>
    <property type="evidence" value="ECO:0000250"/>
    <property type="project" value="TAIR"/>
</dbReference>
<dbReference type="GO" id="GO:0003723">
    <property type="term" value="F:RNA binding"/>
    <property type="evidence" value="ECO:0007669"/>
    <property type="project" value="UniProtKB-KW"/>
</dbReference>
<dbReference type="GO" id="GO:0006396">
    <property type="term" value="P:RNA processing"/>
    <property type="evidence" value="ECO:0007669"/>
    <property type="project" value="InterPro"/>
</dbReference>
<dbReference type="CDD" id="cd11368">
    <property type="entry name" value="RNase_PH_RRP45"/>
    <property type="match status" value="1"/>
</dbReference>
<dbReference type="FunFam" id="3.30.230.70:FF:000007">
    <property type="entry name" value="Exosome complex component RRP45B"/>
    <property type="match status" value="1"/>
</dbReference>
<dbReference type="Gene3D" id="3.30.230.70">
    <property type="entry name" value="GHMP Kinase, N-terminal domain"/>
    <property type="match status" value="1"/>
</dbReference>
<dbReference type="InterPro" id="IPR001247">
    <property type="entry name" value="ExoRNase_PH_dom1"/>
</dbReference>
<dbReference type="InterPro" id="IPR015847">
    <property type="entry name" value="ExoRNase_PH_dom2"/>
</dbReference>
<dbReference type="InterPro" id="IPR036345">
    <property type="entry name" value="ExoRNase_PH_dom2_sf"/>
</dbReference>
<dbReference type="InterPro" id="IPR050590">
    <property type="entry name" value="Exosome_comp_Rrp42_subfam"/>
</dbReference>
<dbReference type="InterPro" id="IPR027408">
    <property type="entry name" value="PNPase/RNase_PH_dom_sf"/>
</dbReference>
<dbReference type="InterPro" id="IPR020568">
    <property type="entry name" value="Ribosomal_Su5_D2-typ_SF"/>
</dbReference>
<dbReference type="InterPro" id="IPR033100">
    <property type="entry name" value="Rrp45"/>
</dbReference>
<dbReference type="PANTHER" id="PTHR11097:SF14">
    <property type="entry name" value="EXOSOME COMPLEX COMPONENT RRP45"/>
    <property type="match status" value="1"/>
</dbReference>
<dbReference type="PANTHER" id="PTHR11097">
    <property type="entry name" value="EXOSOME COMPLEX EXONUCLEASE RIBOSOMAL RNA PROCESSING PROTEIN"/>
    <property type="match status" value="1"/>
</dbReference>
<dbReference type="Pfam" id="PF01138">
    <property type="entry name" value="RNase_PH"/>
    <property type="match status" value="1"/>
</dbReference>
<dbReference type="Pfam" id="PF03725">
    <property type="entry name" value="RNase_PH_C"/>
    <property type="match status" value="1"/>
</dbReference>
<dbReference type="SUPFAM" id="SSF55666">
    <property type="entry name" value="Ribonuclease PH domain 2-like"/>
    <property type="match status" value="1"/>
</dbReference>
<dbReference type="SUPFAM" id="SSF54211">
    <property type="entry name" value="Ribosomal protein S5 domain 2-like"/>
    <property type="match status" value="1"/>
</dbReference>
<comment type="function">
    <text evidence="2 3">Probable 3'-&gt;5' exoribonuclease involved in the regulation of cuticular wax biosynthesis by controlling the expression of CER3. May act by degrading a specific mRNA species encoding a negative regulator of CER3 transcription. Can perform exosomal functions and complement the yeast rrp45 null mutant.</text>
</comment>
<comment type="subcellular location">
    <subcellularLocation>
        <location evidence="2">Cytoplasm</location>
    </subcellularLocation>
    <subcellularLocation>
        <location evidence="2">Nucleus</location>
    </subcellularLocation>
    <text>Excluded from the nucleolus.</text>
</comment>
<comment type="disruption phenotype">
    <text evidence="2 3">Bright green glossy stems and siliques due to reduced cuticular wax accumulation.</text>
</comment>
<comment type="similarity">
    <text evidence="5">Belongs to the RNase PH family.</text>
</comment>
<organism>
    <name type="scientific">Arabidopsis thaliana</name>
    <name type="common">Mouse-ear cress</name>
    <dbReference type="NCBI Taxonomy" id="3702"/>
    <lineage>
        <taxon>Eukaryota</taxon>
        <taxon>Viridiplantae</taxon>
        <taxon>Streptophyta</taxon>
        <taxon>Embryophyta</taxon>
        <taxon>Tracheophyta</taxon>
        <taxon>Spermatophyta</taxon>
        <taxon>Magnoliopsida</taxon>
        <taxon>eudicotyledons</taxon>
        <taxon>Gunneridae</taxon>
        <taxon>Pentapetalae</taxon>
        <taxon>rosids</taxon>
        <taxon>malvids</taxon>
        <taxon>Brassicales</taxon>
        <taxon>Brassicaceae</taxon>
        <taxon>Camelineae</taxon>
        <taxon>Arabidopsis</taxon>
    </lineage>
</organism>
<proteinExistence type="evidence at transcript level"/>